<accession>Q37751</accession>
<dbReference type="EC" id="7.1.1.2"/>
<dbReference type="EMBL" id="X69067">
    <property type="protein sequence ID" value="CAA48811.1"/>
    <property type="molecule type" value="Genomic_DNA"/>
</dbReference>
<dbReference type="PIR" id="S60643">
    <property type="entry name" value="S60643"/>
</dbReference>
<dbReference type="RefSeq" id="NP_007117.1">
    <property type="nucleotide sequence ID" value="NC_001620.1"/>
</dbReference>
<dbReference type="SMR" id="Q37751"/>
<dbReference type="GeneID" id="807794"/>
<dbReference type="KEGG" id="afra:807794"/>
<dbReference type="CTD" id="4539"/>
<dbReference type="GO" id="GO:0031966">
    <property type="term" value="C:mitochondrial membrane"/>
    <property type="evidence" value="ECO:0007669"/>
    <property type="project" value="UniProtKB-SubCell"/>
</dbReference>
<dbReference type="GO" id="GO:0008137">
    <property type="term" value="F:NADH dehydrogenase (ubiquinone) activity"/>
    <property type="evidence" value="ECO:0007669"/>
    <property type="project" value="UniProtKB-EC"/>
</dbReference>
<dbReference type="Gene3D" id="1.10.287.3510">
    <property type="match status" value="1"/>
</dbReference>
<dbReference type="InterPro" id="IPR039428">
    <property type="entry name" value="NUOK/Mnh_C1-like"/>
</dbReference>
<dbReference type="Pfam" id="PF00420">
    <property type="entry name" value="Oxidored_q2"/>
    <property type="match status" value="1"/>
</dbReference>
<sequence length="85" mass="9416">MMIYLSLSLGLLIFSSSNKHLLVTLLSLEFLILLLFSLLVYSNYMSMINAFIFLSVTVCEGALGFSVLVSLVRSSGSDQVQFLNE</sequence>
<comment type="function">
    <text evidence="1">Core subunit of the mitochondrial membrane respiratory chain NADH dehydrogenase (Complex I) that is believed to belong to the minimal assembly required for catalysis. Complex I functions in the transfer of electrons from NADH to the respiratory chain. The immediate electron acceptor for the enzyme is believed to be ubiquinone (By similarity).</text>
</comment>
<comment type="catalytic activity">
    <reaction>
        <text>a ubiquinone + NADH + 5 H(+)(in) = a ubiquinol + NAD(+) + 4 H(+)(out)</text>
        <dbReference type="Rhea" id="RHEA:29091"/>
        <dbReference type="Rhea" id="RHEA-COMP:9565"/>
        <dbReference type="Rhea" id="RHEA-COMP:9566"/>
        <dbReference type="ChEBI" id="CHEBI:15378"/>
        <dbReference type="ChEBI" id="CHEBI:16389"/>
        <dbReference type="ChEBI" id="CHEBI:17976"/>
        <dbReference type="ChEBI" id="CHEBI:57540"/>
        <dbReference type="ChEBI" id="CHEBI:57945"/>
        <dbReference type="EC" id="7.1.1.2"/>
    </reaction>
</comment>
<comment type="subcellular location">
    <subcellularLocation>
        <location evidence="1">Mitochondrion membrane</location>
        <topology evidence="1">Multi-pass membrane protein</topology>
    </subcellularLocation>
</comment>
<comment type="similarity">
    <text evidence="3">Belongs to the complex I subunit 4L family.</text>
</comment>
<gene>
    <name type="primary">ND4L</name>
    <name type="synonym">ND-4L</name>
</gene>
<geneLocation type="mitochondrion"/>
<protein>
    <recommendedName>
        <fullName>NADH-ubiquinone oxidoreductase chain 4L</fullName>
        <ecNumber>7.1.1.2</ecNumber>
    </recommendedName>
    <alternativeName>
        <fullName>NADH dehydrogenase subunit 4L</fullName>
    </alternativeName>
</protein>
<reference key="1">
    <citation type="journal article" date="1994" name="J. Mol. Evol.">
        <title>Speciation in the Artemia genus: mitochondrial DNA analysis of bisexual and parthenogenetic brine shrimps.</title>
        <authorList>
            <person name="Perez M.L."/>
            <person name="Valverde J.R."/>
            <person name="Batuecas B."/>
            <person name="Amat F."/>
            <person name="Marco R."/>
            <person name="Garesse R."/>
        </authorList>
    </citation>
    <scope>NUCLEOTIDE SEQUENCE [GENOMIC DNA]</scope>
</reference>
<name>NU4LM_ARTSF</name>
<keyword id="KW-0249">Electron transport</keyword>
<keyword id="KW-0472">Membrane</keyword>
<keyword id="KW-0496">Mitochondrion</keyword>
<keyword id="KW-0520">NAD</keyword>
<keyword id="KW-0679">Respiratory chain</keyword>
<keyword id="KW-1278">Translocase</keyword>
<keyword id="KW-0812">Transmembrane</keyword>
<keyword id="KW-1133">Transmembrane helix</keyword>
<keyword id="KW-0813">Transport</keyword>
<keyword id="KW-0830">Ubiquinone</keyword>
<feature type="chain" id="PRO_0000118388" description="NADH-ubiquinone oxidoreductase chain 4L">
    <location>
        <begin position="1"/>
        <end position="85"/>
    </location>
</feature>
<feature type="transmembrane region" description="Helical" evidence="2">
    <location>
        <begin position="21"/>
        <end position="41"/>
    </location>
</feature>
<feature type="transmembrane region" description="Helical" evidence="2">
    <location>
        <begin position="51"/>
        <end position="71"/>
    </location>
</feature>
<proteinExistence type="inferred from homology"/>
<evidence type="ECO:0000250" key="1"/>
<evidence type="ECO:0000255" key="2"/>
<evidence type="ECO:0000305" key="3"/>
<organism>
    <name type="scientific">Artemia franciscana</name>
    <name type="common">Brine shrimp</name>
    <name type="synonym">Artemia sanfranciscana</name>
    <dbReference type="NCBI Taxonomy" id="6661"/>
    <lineage>
        <taxon>Eukaryota</taxon>
        <taxon>Metazoa</taxon>
        <taxon>Ecdysozoa</taxon>
        <taxon>Arthropoda</taxon>
        <taxon>Crustacea</taxon>
        <taxon>Branchiopoda</taxon>
        <taxon>Anostraca</taxon>
        <taxon>Artemiidae</taxon>
        <taxon>Artemia</taxon>
    </lineage>
</organism>